<accession>Q13DM7</accession>
<gene>
    <name evidence="1" type="primary">proB</name>
    <name type="ordered locus">RPD_0574</name>
</gene>
<protein>
    <recommendedName>
        <fullName evidence="1">Glutamate 5-kinase</fullName>
        <ecNumber evidence="1">2.7.2.11</ecNumber>
    </recommendedName>
    <alternativeName>
        <fullName evidence="1">Gamma-glutamyl kinase</fullName>
        <shortName evidence="1">GK</shortName>
    </alternativeName>
</protein>
<reference key="1">
    <citation type="submission" date="2006-03" db="EMBL/GenBank/DDBJ databases">
        <title>Complete sequence of Rhodopseudomonas palustris BisB5.</title>
        <authorList>
            <consortium name="US DOE Joint Genome Institute"/>
            <person name="Copeland A."/>
            <person name="Lucas S."/>
            <person name="Lapidus A."/>
            <person name="Barry K."/>
            <person name="Detter J.C."/>
            <person name="Glavina del Rio T."/>
            <person name="Hammon N."/>
            <person name="Israni S."/>
            <person name="Dalin E."/>
            <person name="Tice H."/>
            <person name="Pitluck S."/>
            <person name="Chain P."/>
            <person name="Malfatti S."/>
            <person name="Shin M."/>
            <person name="Vergez L."/>
            <person name="Schmutz J."/>
            <person name="Larimer F."/>
            <person name="Land M."/>
            <person name="Hauser L."/>
            <person name="Pelletier D.A."/>
            <person name="Kyrpides N."/>
            <person name="Lykidis A."/>
            <person name="Oda Y."/>
            <person name="Harwood C.S."/>
            <person name="Richardson P."/>
        </authorList>
    </citation>
    <scope>NUCLEOTIDE SEQUENCE [LARGE SCALE GENOMIC DNA]</scope>
    <source>
        <strain>BisB5</strain>
    </source>
</reference>
<sequence>MARPKLHDFRRLVVKVGSSLLIDSGAGEVRADWLAALAADIAELHRGGRDVMIVSSGSIALGRSRLKLPRGALKLEESQAAAAVGQIALARTWSEVLGSHGIGAGQILVTLQDTEERRRYLNARSTIAKLLEWRAVPVINENDTVATNEIRYGDNDRLAARVATMASADLLILLSDIDGLYTAPPGSNPDAKLIPEVESVTAEIESMAGAAGSELSRGGMRTKIEAAKIATSAGTHMLIASGKIDHPLKAIAEGGPCTWFLTPANPVTARKRWIAGSLEPKGTLTIDAGAVSALRAGKSLLPAGVIRVDGQFARGDAVIVRGPDTHEIGRGLVAYDADDADRIKGRSSPDVMMILGISGRAEMIHRDDLVVGTAPG</sequence>
<keyword id="KW-0028">Amino-acid biosynthesis</keyword>
<keyword id="KW-0067">ATP-binding</keyword>
<keyword id="KW-0963">Cytoplasm</keyword>
<keyword id="KW-0418">Kinase</keyword>
<keyword id="KW-0547">Nucleotide-binding</keyword>
<keyword id="KW-0641">Proline biosynthesis</keyword>
<keyword id="KW-0808">Transferase</keyword>
<proteinExistence type="inferred from homology"/>
<organism>
    <name type="scientific">Rhodopseudomonas palustris (strain BisB5)</name>
    <dbReference type="NCBI Taxonomy" id="316057"/>
    <lineage>
        <taxon>Bacteria</taxon>
        <taxon>Pseudomonadati</taxon>
        <taxon>Pseudomonadota</taxon>
        <taxon>Alphaproteobacteria</taxon>
        <taxon>Hyphomicrobiales</taxon>
        <taxon>Nitrobacteraceae</taxon>
        <taxon>Rhodopseudomonas</taxon>
    </lineage>
</organism>
<dbReference type="EC" id="2.7.2.11" evidence="1"/>
<dbReference type="EMBL" id="CP000283">
    <property type="protein sequence ID" value="ABE37812.1"/>
    <property type="molecule type" value="Genomic_DNA"/>
</dbReference>
<dbReference type="SMR" id="Q13DM7"/>
<dbReference type="STRING" id="316057.RPD_0574"/>
<dbReference type="KEGG" id="rpd:RPD_0574"/>
<dbReference type="eggNOG" id="COG0263">
    <property type="taxonomic scope" value="Bacteria"/>
</dbReference>
<dbReference type="HOGENOM" id="CLU_025400_2_0_5"/>
<dbReference type="BioCyc" id="RPAL316057:RPD_RS02950-MONOMER"/>
<dbReference type="UniPathway" id="UPA00098">
    <property type="reaction ID" value="UER00359"/>
</dbReference>
<dbReference type="Proteomes" id="UP000001818">
    <property type="component" value="Chromosome"/>
</dbReference>
<dbReference type="GO" id="GO:0005829">
    <property type="term" value="C:cytosol"/>
    <property type="evidence" value="ECO:0007669"/>
    <property type="project" value="TreeGrafter"/>
</dbReference>
<dbReference type="GO" id="GO:0005524">
    <property type="term" value="F:ATP binding"/>
    <property type="evidence" value="ECO:0007669"/>
    <property type="project" value="UniProtKB-KW"/>
</dbReference>
<dbReference type="GO" id="GO:0004349">
    <property type="term" value="F:glutamate 5-kinase activity"/>
    <property type="evidence" value="ECO:0007669"/>
    <property type="project" value="UniProtKB-UniRule"/>
</dbReference>
<dbReference type="GO" id="GO:0003723">
    <property type="term" value="F:RNA binding"/>
    <property type="evidence" value="ECO:0007669"/>
    <property type="project" value="InterPro"/>
</dbReference>
<dbReference type="GO" id="GO:0055129">
    <property type="term" value="P:L-proline biosynthetic process"/>
    <property type="evidence" value="ECO:0007669"/>
    <property type="project" value="UniProtKB-UniRule"/>
</dbReference>
<dbReference type="CDD" id="cd04242">
    <property type="entry name" value="AAK_G5K_ProB"/>
    <property type="match status" value="1"/>
</dbReference>
<dbReference type="CDD" id="cd21157">
    <property type="entry name" value="PUA_G5K"/>
    <property type="match status" value="1"/>
</dbReference>
<dbReference type="FunFam" id="2.30.130.10:FF:000007">
    <property type="entry name" value="Glutamate 5-kinase"/>
    <property type="match status" value="1"/>
</dbReference>
<dbReference type="FunFam" id="3.40.1160.10:FF:000018">
    <property type="entry name" value="Glutamate 5-kinase"/>
    <property type="match status" value="1"/>
</dbReference>
<dbReference type="Gene3D" id="3.40.1160.10">
    <property type="entry name" value="Acetylglutamate kinase-like"/>
    <property type="match status" value="1"/>
</dbReference>
<dbReference type="Gene3D" id="2.30.130.10">
    <property type="entry name" value="PUA domain"/>
    <property type="match status" value="1"/>
</dbReference>
<dbReference type="HAMAP" id="MF_00456">
    <property type="entry name" value="ProB"/>
    <property type="match status" value="1"/>
</dbReference>
<dbReference type="InterPro" id="IPR036393">
    <property type="entry name" value="AceGlu_kinase-like_sf"/>
</dbReference>
<dbReference type="InterPro" id="IPR001048">
    <property type="entry name" value="Asp/Glu/Uridylate_kinase"/>
</dbReference>
<dbReference type="InterPro" id="IPR041739">
    <property type="entry name" value="G5K_ProB"/>
</dbReference>
<dbReference type="InterPro" id="IPR001057">
    <property type="entry name" value="Glu/AcGlu_kinase"/>
</dbReference>
<dbReference type="InterPro" id="IPR011529">
    <property type="entry name" value="Glu_5kinase"/>
</dbReference>
<dbReference type="InterPro" id="IPR005715">
    <property type="entry name" value="Glu_5kinase/COase_Synthase"/>
</dbReference>
<dbReference type="InterPro" id="IPR019797">
    <property type="entry name" value="Glutamate_5-kinase_CS"/>
</dbReference>
<dbReference type="InterPro" id="IPR002478">
    <property type="entry name" value="PUA"/>
</dbReference>
<dbReference type="InterPro" id="IPR015947">
    <property type="entry name" value="PUA-like_sf"/>
</dbReference>
<dbReference type="InterPro" id="IPR036974">
    <property type="entry name" value="PUA_sf"/>
</dbReference>
<dbReference type="NCBIfam" id="TIGR01027">
    <property type="entry name" value="proB"/>
    <property type="match status" value="1"/>
</dbReference>
<dbReference type="PANTHER" id="PTHR43654">
    <property type="entry name" value="GLUTAMATE 5-KINASE"/>
    <property type="match status" value="1"/>
</dbReference>
<dbReference type="PANTHER" id="PTHR43654:SF1">
    <property type="entry name" value="ISOPENTENYL PHOSPHATE KINASE"/>
    <property type="match status" value="1"/>
</dbReference>
<dbReference type="Pfam" id="PF00696">
    <property type="entry name" value="AA_kinase"/>
    <property type="match status" value="1"/>
</dbReference>
<dbReference type="Pfam" id="PF01472">
    <property type="entry name" value="PUA"/>
    <property type="match status" value="1"/>
</dbReference>
<dbReference type="PIRSF" id="PIRSF000729">
    <property type="entry name" value="GK"/>
    <property type="match status" value="1"/>
</dbReference>
<dbReference type="PRINTS" id="PR00474">
    <property type="entry name" value="GLU5KINASE"/>
</dbReference>
<dbReference type="SMART" id="SM00359">
    <property type="entry name" value="PUA"/>
    <property type="match status" value="1"/>
</dbReference>
<dbReference type="SUPFAM" id="SSF53633">
    <property type="entry name" value="Carbamate kinase-like"/>
    <property type="match status" value="1"/>
</dbReference>
<dbReference type="SUPFAM" id="SSF88697">
    <property type="entry name" value="PUA domain-like"/>
    <property type="match status" value="1"/>
</dbReference>
<dbReference type="PROSITE" id="PS00902">
    <property type="entry name" value="GLUTAMATE_5_KINASE"/>
    <property type="match status" value="1"/>
</dbReference>
<dbReference type="PROSITE" id="PS50890">
    <property type="entry name" value="PUA"/>
    <property type="match status" value="1"/>
</dbReference>
<comment type="function">
    <text evidence="1">Catalyzes the transfer of a phosphate group to glutamate to form L-glutamate 5-phosphate.</text>
</comment>
<comment type="catalytic activity">
    <reaction evidence="1">
        <text>L-glutamate + ATP = L-glutamyl 5-phosphate + ADP</text>
        <dbReference type="Rhea" id="RHEA:14877"/>
        <dbReference type="ChEBI" id="CHEBI:29985"/>
        <dbReference type="ChEBI" id="CHEBI:30616"/>
        <dbReference type="ChEBI" id="CHEBI:58274"/>
        <dbReference type="ChEBI" id="CHEBI:456216"/>
        <dbReference type="EC" id="2.7.2.11"/>
    </reaction>
</comment>
<comment type="pathway">
    <text evidence="1">Amino-acid biosynthesis; L-proline biosynthesis; L-glutamate 5-semialdehyde from L-glutamate: step 1/2.</text>
</comment>
<comment type="subcellular location">
    <subcellularLocation>
        <location evidence="1">Cytoplasm</location>
    </subcellularLocation>
</comment>
<comment type="similarity">
    <text evidence="1">Belongs to the glutamate 5-kinase family.</text>
</comment>
<feature type="chain" id="PRO_1000081100" description="Glutamate 5-kinase">
    <location>
        <begin position="1"/>
        <end position="376"/>
    </location>
</feature>
<feature type="domain" description="PUA" evidence="1">
    <location>
        <begin position="281"/>
        <end position="358"/>
    </location>
</feature>
<feature type="binding site" evidence="1">
    <location>
        <position position="15"/>
    </location>
    <ligand>
        <name>ATP</name>
        <dbReference type="ChEBI" id="CHEBI:30616"/>
    </ligand>
</feature>
<feature type="binding site" evidence="1">
    <location>
        <position position="56"/>
    </location>
    <ligand>
        <name>substrate</name>
    </ligand>
</feature>
<feature type="binding site" evidence="1">
    <location>
        <position position="143"/>
    </location>
    <ligand>
        <name>substrate</name>
    </ligand>
</feature>
<feature type="binding site" evidence="1">
    <location>
        <position position="155"/>
    </location>
    <ligand>
        <name>substrate</name>
    </ligand>
</feature>
<feature type="binding site" evidence="1">
    <location>
        <begin position="175"/>
        <end position="176"/>
    </location>
    <ligand>
        <name>ATP</name>
        <dbReference type="ChEBI" id="CHEBI:30616"/>
    </ligand>
</feature>
<evidence type="ECO:0000255" key="1">
    <source>
        <dbReference type="HAMAP-Rule" id="MF_00456"/>
    </source>
</evidence>
<name>PROB_RHOPS</name>